<sequence length="12" mass="1202">DSPAGVSDAQKQ</sequence>
<proteinExistence type="evidence at protein level"/>
<keyword id="KW-0186">Copper</keyword>
<keyword id="KW-0903">Direct protein sequencing</keyword>
<keyword id="KW-0561">Oxygen transport</keyword>
<keyword id="KW-0964">Secreted</keyword>
<keyword id="KW-0813">Transport</keyword>
<protein>
    <recommendedName>
        <fullName>Hemocyanin subunit 1</fullName>
    </recommendedName>
</protein>
<accession>P84846</accession>
<comment type="function">
    <text evidence="1">Hemocyanins are copper-containing oxygen carriers occurring freely dissolved in the hemolymph of many mollusks and arthropods.</text>
</comment>
<comment type="subcellular location">
    <subcellularLocation>
        <location evidence="1">Secreted</location>
        <location evidence="1">Extracellular space</location>
    </subcellularLocation>
</comment>
<comment type="tissue specificity">
    <text evidence="2">Hemolymph.</text>
</comment>
<comment type="similarity">
    <text evidence="4">Belongs to the tyrosinase family. Hemocyanin subfamily.</text>
</comment>
<organism>
    <name type="scientific">Necora puber</name>
    <name type="common">Velvet swimming crab</name>
    <name type="synonym">Macropipus puber</name>
    <dbReference type="NCBI Taxonomy" id="338210"/>
    <lineage>
        <taxon>Eukaryota</taxon>
        <taxon>Metazoa</taxon>
        <taxon>Ecdysozoa</taxon>
        <taxon>Arthropoda</taxon>
        <taxon>Crustacea</taxon>
        <taxon>Multicrustacea</taxon>
        <taxon>Malacostraca</taxon>
        <taxon>Eumalacostraca</taxon>
        <taxon>Eucarida</taxon>
        <taxon>Decapoda</taxon>
        <taxon>Pleocyemata</taxon>
        <taxon>Brachyura</taxon>
        <taxon>Eubrachyura</taxon>
        <taxon>Portunoidea</taxon>
        <taxon>Polybiidae</taxon>
        <taxon>Necora</taxon>
    </lineage>
</organism>
<feature type="chain" id="PRO_0000235845" description="Hemocyanin subunit 1">
    <location>
        <begin position="1"/>
        <end position="12" status="greater than"/>
    </location>
</feature>
<feature type="non-terminal residue" evidence="3">
    <location>
        <position position="12"/>
    </location>
</feature>
<reference evidence="4" key="1">
    <citation type="journal article" date="2007" name="Mar. Biol.">
        <title>Structural and functional heterogeneity of hemocyanin: intra- and inter-specific comparison in four species of portunid crabs (Crustacea: Portunidae).</title>
        <authorList>
            <person name="Giomi F."/>
            <person name="Raicevich S."/>
            <person name="Ferrarese A."/>
            <person name="Pranovi F."/>
            <person name="Di Muro P."/>
            <person name="Beltramin K."/>
        </authorList>
    </citation>
    <scope>PROTEIN SEQUENCE</scope>
    <scope>TISSUE SPECIFICITY</scope>
    <source>
        <tissue evidence="2">Hemolymph</tissue>
    </source>
</reference>
<evidence type="ECO:0000250" key="1">
    <source>
        <dbReference type="UniProtKB" id="P84293"/>
    </source>
</evidence>
<evidence type="ECO:0000269" key="2">
    <source ref="1"/>
</evidence>
<evidence type="ECO:0000303" key="3">
    <source ref="1"/>
</evidence>
<evidence type="ECO:0000305" key="4"/>
<name>HCY1_NECPU</name>
<dbReference type="GO" id="GO:0005615">
    <property type="term" value="C:extracellular space"/>
    <property type="evidence" value="ECO:0000314"/>
    <property type="project" value="UniProtKB"/>
</dbReference>
<dbReference type="GO" id="GO:0005344">
    <property type="term" value="F:oxygen carrier activity"/>
    <property type="evidence" value="ECO:0007669"/>
    <property type="project" value="UniProtKB-KW"/>
</dbReference>